<gene>
    <name type="primary">PCSK9</name>
</gene>
<organism>
    <name type="scientific">Gorilla gorilla gorilla</name>
    <name type="common">Western lowland gorilla</name>
    <dbReference type="NCBI Taxonomy" id="9595"/>
    <lineage>
        <taxon>Eukaryota</taxon>
        <taxon>Metazoa</taxon>
        <taxon>Chordata</taxon>
        <taxon>Craniata</taxon>
        <taxon>Vertebrata</taxon>
        <taxon>Euteleostomi</taxon>
        <taxon>Mammalia</taxon>
        <taxon>Eutheria</taxon>
        <taxon>Euarchontoglires</taxon>
        <taxon>Primates</taxon>
        <taxon>Haplorrhini</taxon>
        <taxon>Catarrhini</taxon>
        <taxon>Hominidae</taxon>
        <taxon>Gorilla</taxon>
    </lineage>
</organism>
<reference key="1">
    <citation type="journal article" date="2007" name="PLoS ONE">
        <title>Evidence for positive selection in the C-terminal domain of the cholesterol metabolism gene PCSK9 based on phylogenetic analysis in 14 primate species.</title>
        <authorList>
            <person name="Ding K."/>
            <person name="McDonough S.J."/>
            <person name="Kullo I.J."/>
        </authorList>
    </citation>
    <scope>NUCLEOTIDE SEQUENCE [MRNA]</scope>
</reference>
<feature type="signal peptide" evidence="1">
    <location>
        <begin position="1"/>
        <end position="28"/>
    </location>
</feature>
<feature type="propeptide" id="PRO_0000318280" evidence="1">
    <location>
        <begin position="29"/>
        <end position="150"/>
    </location>
</feature>
<feature type="chain" id="PRO_0000318281" description="Proprotein convertase subtilisin/kexin type 9">
    <location>
        <begin position="151"/>
        <end position="690"/>
    </location>
</feature>
<feature type="domain" description="Inhibitor I9" evidence="3">
    <location>
        <begin position="75"/>
        <end position="147"/>
    </location>
</feature>
<feature type="domain" description="Peptidase S8" evidence="4">
    <location>
        <begin position="153"/>
        <end position="459"/>
    </location>
</feature>
<feature type="region of interest" description="C-terminal domain" evidence="1">
    <location>
        <begin position="448"/>
        <end position="690"/>
    </location>
</feature>
<feature type="active site" description="Charge relay system" evidence="4">
    <location>
        <position position="184"/>
    </location>
</feature>
<feature type="active site" description="Charge relay system" evidence="4">
    <location>
        <position position="224"/>
    </location>
</feature>
<feature type="active site" description="Charge relay system" evidence="4">
    <location>
        <position position="384"/>
    </location>
</feature>
<feature type="site" description="Cleavage; by autolysis" evidence="1">
    <location>
        <begin position="150"/>
        <end position="151"/>
    </location>
</feature>
<feature type="site" description="Cleavage; by furin and PCSK5" evidence="1">
    <location>
        <begin position="216"/>
        <end position="217"/>
    </location>
</feature>
<feature type="modified residue" description="Sulfotyrosine" evidence="1">
    <location>
        <position position="36"/>
    </location>
</feature>
<feature type="modified residue" description="Phosphoserine" evidence="2">
    <location>
        <position position="45"/>
    </location>
</feature>
<feature type="modified residue" description="Phosphoserine" evidence="2">
    <location>
        <position position="686"/>
    </location>
</feature>
<feature type="glycosylation site" description="N-linked (GlcNAc...) asparagine" evidence="3">
    <location>
        <position position="531"/>
    </location>
</feature>
<feature type="disulfide bond" evidence="3">
    <location>
        <begin position="221"/>
        <end position="253"/>
    </location>
</feature>
<feature type="disulfide bond" evidence="3">
    <location>
        <begin position="321"/>
        <end position="356"/>
    </location>
</feature>
<feature type="disulfide bond" evidence="3">
    <location>
        <begin position="455"/>
        <end position="525"/>
    </location>
</feature>
<feature type="disulfide bond" evidence="3">
    <location>
        <begin position="475"/>
        <end position="524"/>
    </location>
</feature>
<feature type="disulfide bond" evidence="3">
    <location>
        <begin position="484"/>
        <end position="507"/>
    </location>
</feature>
<feature type="disulfide bond" evidence="3">
    <location>
        <begin position="532"/>
        <end position="599"/>
    </location>
</feature>
<feature type="disulfide bond" evidence="3">
    <location>
        <begin position="550"/>
        <end position="598"/>
    </location>
</feature>
<feature type="disulfide bond" evidence="3">
    <location>
        <begin position="560"/>
        <end position="586"/>
    </location>
</feature>
<feature type="disulfide bond" evidence="3">
    <location>
        <begin position="606"/>
        <end position="677"/>
    </location>
</feature>
<feature type="disulfide bond" evidence="3">
    <location>
        <begin position="624"/>
        <end position="676"/>
    </location>
</feature>
<feature type="disulfide bond" evidence="3">
    <location>
        <begin position="633"/>
        <end position="652"/>
    </location>
</feature>
<comment type="function">
    <text evidence="1">Crucial player in the regulation of plasma cholesterol homeostasis. Binds to low-density lipid receptor family members: low density lipoprotein receptor (LDLR), very low density lipoprotein receptor (VLDLR), apolipoprotein E receptor (LRP1/APOER) and apolipoprotein receptor 2 (LRP8/APOER2), and promotes their degradation in intracellular acidic compartments. Acts via a non-proteolytic mechanism to enhance the degradation of the hepatic LDLR through a clathrin LDLRAP1/ARH-mediated pathway. May prevent the recycling of LDLR from endosomes to the cell surface or direct it to lysosomes for degradation. Can induce ubiquitination of LDLR leading to its subsequent degradation. Inhibits intracellular degradation of APOB via the autophagosome/lysosome pathway in a LDLR-independent manner. Involved in the disposal of non-acetylated intermediates of BACE1 in the early secretory pathway. Inhibits epithelial Na(+) channel (ENaC)-mediated Na(+) absorption by reducing ENaC surface expression primarily by increasing its proteasomal degradation. Regulates neuronal apoptosis via modulation of LRP8/APOER2 levels and related anti-apoptotic signaling pathways (By similarity).</text>
</comment>
<comment type="cofactor">
    <cofactor evidence="1">
        <name>Ca(2+)</name>
        <dbReference type="ChEBI" id="CHEBI:29108"/>
    </cofactor>
</comment>
<comment type="activity regulation">
    <text evidence="1">Its proteolytic activity is autoinhibited by the non-covalent binding of the propeptide to the catalytic domain. Inhibited by EGTA (By similarity).</text>
</comment>
<comment type="subunit">
    <text evidence="2">Monomer. Can self-associate to form dimers and higher multimers which may have increased LDLR degrading activity. The precursor protein but not the mature protein may form multimers. Interacts with APOB, VLDLR, LRP8/APOER2 and BACE1. The full-length immature form (pro-PCSK9) interacts with SCNN1A, SCNN1B and SCNN1G. The pro-PCSK9 form (via C-terminal domain) interacts with LDLR. Interacts (via the C-terminal domain) with ANXA2 (via repeat Annexin 1); the interaction inhibits the degradation of LDLR.</text>
</comment>
<comment type="subcellular location">
    <subcellularLocation>
        <location evidence="1">Cytoplasm</location>
    </subcellularLocation>
    <subcellularLocation>
        <location evidence="1">Secreted</location>
    </subcellularLocation>
    <subcellularLocation>
        <location evidence="1">Endosome</location>
    </subcellularLocation>
    <subcellularLocation>
        <location evidence="1">Lysosome</location>
    </subcellularLocation>
    <subcellularLocation>
        <location evidence="1">Cell surface</location>
    </subcellularLocation>
    <subcellularLocation>
        <location evidence="1">Endoplasmic reticulum</location>
    </subcellularLocation>
    <subcellularLocation>
        <location evidence="1">Golgi apparatus</location>
    </subcellularLocation>
    <text evidence="1">Autocatalytic cleavage is required to transport it from the endoplasmic reticulum to the Golgi apparatus and for the secretion of the mature protein. Localizes to the endoplasmic reticulum in the absence of LDLR and colocalizes to the cell surface and to the endosomes/lysosomes in the presence of LDLR. The sorting to the cell surface and endosomes is required in order to fully promote LDLR degradation (By similarity).</text>
</comment>
<comment type="domain">
    <text evidence="1">The C-terminal domain (CRD) is essential for the LDLR-binding and degrading activities.</text>
</comment>
<comment type="domain">
    <text evidence="1">The catalytic domain is responsible for mediating its self-association.</text>
</comment>
<comment type="PTM">
    <text evidence="1">Cleavage by furin and PCSK5 generates a truncated inactive protein that is unable to induce LDLR degradation.</text>
</comment>
<comment type="PTM">
    <text evidence="1">Undergoes autocatalytic cleavage in the endoplasmic reticulum to release the propeptide from the N-terminus and the cleavage of the propeptide is strictly required for its maturation and activation. The cleaved propeptide however remains associated with the catalytic domain through non-covalent interactions, preventing potential substrates from accessing its active site. As a result, it is secreted from cells as a propeptide-containing, enzymatically inactive protein (By similarity).</text>
</comment>
<comment type="PTM">
    <text evidence="1">Phosphorylation protects the propeptide against proteolysis.</text>
</comment>
<comment type="similarity">
    <text evidence="5">Belongs to the peptidase S8 family.</text>
</comment>
<name>PCSK9_GORGO</name>
<sequence length="690" mass="74164">MGTVSSRRSWWPLPLLLLLLLGPAGARAQEDEDGDYEELVLALRSEEDGLAEAPEHGTTATFHRCAKDPWRLPGTYVVVLKEETHLSQSERTARRLQAQAARRGYLTKILHVFHGLLPGFLVKMSGDLLELALKLPHVDYIEEDSSVFAQSIPWNLERITPPRYRADEYQPPDGGSLVEVYLLDTSIQSDHREIEGRVMVTDFENVPEEDGTRFHRQASKCDSHGTHLAGVVSGRDAGVAKGASMRSLRVLNCQGKGTVSGTLIGLEFIRKSQLVQPVGPLVVLLPLAGGYSRVLNAACQRLARAGVVLVTAAGNFRDDACLYSPASAPEVITVGATNAQDQPVTLGTLGTNFGRCVDLFAPGEDIIGASSDCSTCFVSQSGTSQAAAHVAGIAAMMLSAEPELTLAELRQRLIHFSAKDVINEAWFPEDQRVLTPNLVAALPPSTHGAGWQLFCRTVWSAHSGPTRMATAVARCAPDEELLSCSSFSRSGKRRGEHMEAQGGKLVCRAHNAFGGEGVYAIARCCLLPQANCSVHTAPPAEAGMGTRVHCHQQGHVLTGCSSHWEVEDLGTHKPPVLRPRGQPNQCVGHREASIHASCCHAPGLECKVKEHGIPAPQEQVTVACEEGWTLTGCSALPGTSHVLGAYGIDNTCVVRSRDVSTTGRTSEEALAAVAICCRSRHLVQASQELQ</sequence>
<keyword id="KW-0053">Apoptosis</keyword>
<keyword id="KW-0068">Autocatalytic cleavage</keyword>
<keyword id="KW-0106">Calcium</keyword>
<keyword id="KW-0153">Cholesterol metabolism</keyword>
<keyword id="KW-0963">Cytoplasm</keyword>
<keyword id="KW-1015">Disulfide bond</keyword>
<keyword id="KW-0256">Endoplasmic reticulum</keyword>
<keyword id="KW-0967">Endosome</keyword>
<keyword id="KW-0325">Glycoprotein</keyword>
<keyword id="KW-0333">Golgi apparatus</keyword>
<keyword id="KW-0378">Hydrolase</keyword>
<keyword id="KW-0443">Lipid metabolism</keyword>
<keyword id="KW-0458">Lysosome</keyword>
<keyword id="KW-0597">Phosphoprotein</keyword>
<keyword id="KW-0645">Protease</keyword>
<keyword id="KW-1185">Reference proteome</keyword>
<keyword id="KW-0964">Secreted</keyword>
<keyword id="KW-0720">Serine protease</keyword>
<keyword id="KW-0732">Signal</keyword>
<keyword id="KW-0753">Steroid metabolism</keyword>
<keyword id="KW-1207">Sterol metabolism</keyword>
<keyword id="KW-0765">Sulfation</keyword>
<keyword id="KW-0865">Zymogen</keyword>
<accession>A8T650</accession>
<protein>
    <recommendedName>
        <fullName>Proprotein convertase subtilisin/kexin type 9</fullName>
        <ecNumber>3.4.21.-</ecNumber>
    </recommendedName>
    <alternativeName>
        <fullName>Proprotein convertase 9</fullName>
        <shortName>PC9</shortName>
    </alternativeName>
    <alternativeName>
        <fullName>Subtilisin/kexin-like protease PC9</fullName>
    </alternativeName>
</protein>
<proteinExistence type="evidence at transcript level"/>
<dbReference type="EC" id="3.4.21.-"/>
<dbReference type="EMBL" id="EF692498">
    <property type="protein sequence ID" value="ABV59218.1"/>
    <property type="molecule type" value="mRNA"/>
</dbReference>
<dbReference type="SMR" id="A8T650"/>
<dbReference type="FunCoup" id="A8T650">
    <property type="interactions" value="57"/>
</dbReference>
<dbReference type="STRING" id="9593.ENSGGOP00000022223"/>
<dbReference type="GlyCosmos" id="A8T650">
    <property type="glycosylation" value="1 site, No reported glycans"/>
</dbReference>
<dbReference type="eggNOG" id="KOG1153">
    <property type="taxonomic scope" value="Eukaryota"/>
</dbReference>
<dbReference type="InParanoid" id="A8T650"/>
<dbReference type="Proteomes" id="UP000001519">
    <property type="component" value="Unplaced"/>
</dbReference>
<dbReference type="GO" id="GO:0009986">
    <property type="term" value="C:cell surface"/>
    <property type="evidence" value="ECO:0000250"/>
    <property type="project" value="UniProtKB"/>
</dbReference>
<dbReference type="GO" id="GO:0005737">
    <property type="term" value="C:cytoplasm"/>
    <property type="evidence" value="ECO:0000250"/>
    <property type="project" value="UniProtKB"/>
</dbReference>
<dbReference type="GO" id="GO:0005769">
    <property type="term" value="C:early endosome"/>
    <property type="evidence" value="ECO:0000250"/>
    <property type="project" value="UniProtKB"/>
</dbReference>
<dbReference type="GO" id="GO:0005783">
    <property type="term" value="C:endoplasmic reticulum"/>
    <property type="evidence" value="ECO:0000250"/>
    <property type="project" value="UniProtKB"/>
</dbReference>
<dbReference type="GO" id="GO:0005615">
    <property type="term" value="C:extracellular space"/>
    <property type="evidence" value="ECO:0000318"/>
    <property type="project" value="GO_Central"/>
</dbReference>
<dbReference type="GO" id="GO:0005794">
    <property type="term" value="C:Golgi apparatus"/>
    <property type="evidence" value="ECO:0000250"/>
    <property type="project" value="UniProtKB"/>
</dbReference>
<dbReference type="GO" id="GO:0005770">
    <property type="term" value="C:late endosome"/>
    <property type="evidence" value="ECO:0000250"/>
    <property type="project" value="UniProtKB"/>
</dbReference>
<dbReference type="GO" id="GO:0005764">
    <property type="term" value="C:lysosome"/>
    <property type="evidence" value="ECO:0000250"/>
    <property type="project" value="UniProtKB"/>
</dbReference>
<dbReference type="GO" id="GO:0034185">
    <property type="term" value="F:apolipoprotein binding"/>
    <property type="evidence" value="ECO:0000250"/>
    <property type="project" value="UniProtKB"/>
</dbReference>
<dbReference type="GO" id="GO:0030169">
    <property type="term" value="F:low-density lipoprotein particle binding"/>
    <property type="evidence" value="ECO:0000250"/>
    <property type="project" value="UniProtKB"/>
</dbReference>
<dbReference type="GO" id="GO:0004252">
    <property type="term" value="F:serine-type endopeptidase activity"/>
    <property type="evidence" value="ECO:0000318"/>
    <property type="project" value="GO_Central"/>
</dbReference>
<dbReference type="GO" id="GO:0034189">
    <property type="term" value="F:very-low-density lipoprotein particle binding"/>
    <property type="evidence" value="ECO:0000250"/>
    <property type="project" value="UniProtKB"/>
</dbReference>
<dbReference type="GO" id="GO:0006915">
    <property type="term" value="P:apoptotic process"/>
    <property type="evidence" value="ECO:0007669"/>
    <property type="project" value="UniProtKB-KW"/>
</dbReference>
<dbReference type="GO" id="GO:0008203">
    <property type="term" value="P:cholesterol metabolic process"/>
    <property type="evidence" value="ECO:0007669"/>
    <property type="project" value="UniProtKB-KW"/>
</dbReference>
<dbReference type="GO" id="GO:0032802">
    <property type="term" value="P:low-density lipoprotein particle receptor catabolic process"/>
    <property type="evidence" value="ECO:0000250"/>
    <property type="project" value="UniProtKB"/>
</dbReference>
<dbReference type="GO" id="GO:0006508">
    <property type="term" value="P:proteolysis"/>
    <property type="evidence" value="ECO:0007669"/>
    <property type="project" value="UniProtKB-KW"/>
</dbReference>
<dbReference type="GO" id="GO:0043523">
    <property type="term" value="P:regulation of neuron apoptotic process"/>
    <property type="evidence" value="ECO:0000250"/>
    <property type="project" value="UniProtKB"/>
</dbReference>
<dbReference type="CDD" id="cd16839">
    <property type="entry name" value="PCSK9_C-CRD"/>
    <property type="match status" value="1"/>
</dbReference>
<dbReference type="CDD" id="cd04077">
    <property type="entry name" value="Peptidases_S8_PCSK9_ProteinaseK_like"/>
    <property type="match status" value="1"/>
</dbReference>
<dbReference type="FunFam" id="2.60.120.690:FF:000001">
    <property type="entry name" value="Proprotein convertase subtilisin/kexin type 9"/>
    <property type="match status" value="1"/>
</dbReference>
<dbReference type="FunFam" id="3.30.70.80:FF:000004">
    <property type="entry name" value="Proprotein convertase subtilisin/kexin type 9"/>
    <property type="match status" value="1"/>
</dbReference>
<dbReference type="FunFam" id="3.40.50.200:FF:000016">
    <property type="entry name" value="Proprotein convertase subtilisin/kexin type 9"/>
    <property type="match status" value="1"/>
</dbReference>
<dbReference type="Gene3D" id="3.30.70.80">
    <property type="entry name" value="Peptidase S8 propeptide/proteinase inhibitor I9"/>
    <property type="match status" value="1"/>
</dbReference>
<dbReference type="Gene3D" id="3.40.50.200">
    <property type="entry name" value="Peptidase S8/S53 domain"/>
    <property type="match status" value="1"/>
</dbReference>
<dbReference type="Gene3D" id="2.60.120.690">
    <property type="entry name" value="Proprotein convertase subtilisin/kexin type 9"/>
    <property type="match status" value="1"/>
</dbReference>
<dbReference type="InterPro" id="IPR041254">
    <property type="entry name" value="PCSK9_C1"/>
</dbReference>
<dbReference type="InterPro" id="IPR041052">
    <property type="entry name" value="PCSK9_C2"/>
</dbReference>
<dbReference type="InterPro" id="IPR041051">
    <property type="entry name" value="PCSK9_C3"/>
</dbReference>
<dbReference type="InterPro" id="IPR034193">
    <property type="entry name" value="PCSK9_ProteinaseK-like"/>
</dbReference>
<dbReference type="InterPro" id="IPR000209">
    <property type="entry name" value="Peptidase_S8/S53_dom"/>
</dbReference>
<dbReference type="InterPro" id="IPR036852">
    <property type="entry name" value="Peptidase_S8/S53_dom_sf"/>
</dbReference>
<dbReference type="InterPro" id="IPR050131">
    <property type="entry name" value="Peptidase_S8_subtilisin-like"/>
</dbReference>
<dbReference type="InterPro" id="IPR015500">
    <property type="entry name" value="Peptidase_S8_subtilisin-rel"/>
</dbReference>
<dbReference type="InterPro" id="IPR010259">
    <property type="entry name" value="S8pro/Inhibitor_I9"/>
</dbReference>
<dbReference type="InterPro" id="IPR037045">
    <property type="entry name" value="S8pro/Inhibitor_I9_sf"/>
</dbReference>
<dbReference type="PANTHER" id="PTHR43806">
    <property type="entry name" value="PEPTIDASE S8"/>
    <property type="match status" value="1"/>
</dbReference>
<dbReference type="PANTHER" id="PTHR43806:SF60">
    <property type="entry name" value="PROPROTEIN CONVERTASE SUBTILISIN_KEXIN TYPE 9"/>
    <property type="match status" value="1"/>
</dbReference>
<dbReference type="Pfam" id="PF05922">
    <property type="entry name" value="Inhibitor_I9"/>
    <property type="match status" value="1"/>
</dbReference>
<dbReference type="Pfam" id="PF18459">
    <property type="entry name" value="PCSK9_C1"/>
    <property type="match status" value="1"/>
</dbReference>
<dbReference type="Pfam" id="PF18464">
    <property type="entry name" value="PCSK9_C2"/>
    <property type="match status" value="1"/>
</dbReference>
<dbReference type="Pfam" id="PF18463">
    <property type="entry name" value="PCSK9_C3"/>
    <property type="match status" value="1"/>
</dbReference>
<dbReference type="Pfam" id="PF00082">
    <property type="entry name" value="Peptidase_S8"/>
    <property type="match status" value="1"/>
</dbReference>
<dbReference type="PRINTS" id="PR00723">
    <property type="entry name" value="SUBTILISIN"/>
</dbReference>
<dbReference type="SUPFAM" id="SSF54897">
    <property type="entry name" value="Protease propeptides/inhibitors"/>
    <property type="match status" value="1"/>
</dbReference>
<dbReference type="SUPFAM" id="SSF52743">
    <property type="entry name" value="Subtilisin-like"/>
    <property type="match status" value="1"/>
</dbReference>
<dbReference type="PROSITE" id="PS51892">
    <property type="entry name" value="SUBTILASE"/>
    <property type="match status" value="1"/>
</dbReference>
<evidence type="ECO:0000250" key="1"/>
<evidence type="ECO:0000250" key="2">
    <source>
        <dbReference type="UniProtKB" id="Q8NBP7"/>
    </source>
</evidence>
<evidence type="ECO:0000255" key="3"/>
<evidence type="ECO:0000255" key="4">
    <source>
        <dbReference type="PROSITE-ProRule" id="PRU01240"/>
    </source>
</evidence>
<evidence type="ECO:0000305" key="5"/>